<feature type="chain" id="PRO_0000072347" description="Mating-type switching protein swi10">
    <location>
        <begin position="1"/>
        <end position="252"/>
    </location>
</feature>
<feature type="DNA-binding region" evidence="1">
    <location>
        <begin position="76"/>
        <end position="98"/>
    </location>
</feature>
<name>SWI10_SCHPO</name>
<comment type="function">
    <text>Involved in termination of copy-synthesis during mating-type switching. Involved in nucleotide excision repair of DNA damaged with UV light, bulky adducts, or cross-linking agents. Along with RAD16 forms an endonuclease that specifically degrades single-stranded DNA.</text>
</comment>
<comment type="subunit">
    <text>Heterodimer composed of rad16 and swi10.</text>
</comment>
<comment type="interaction">
    <interactant intactId="EBI-16120325">
        <id>Q06182</id>
    </interactant>
    <interactant intactId="EBI-16120215">
        <id>P36617</id>
        <label>rad16</label>
    </interactant>
    <organismsDiffer>false</organismsDiffer>
    <experiments>2</experiments>
</comment>
<comment type="subcellular location">
    <subcellularLocation>
        <location>Nucleus</location>
    </subcellularLocation>
</comment>
<comment type="similarity">
    <text evidence="2">Belongs to the ERCC1/RAD10/SWI10 family.</text>
</comment>
<organism>
    <name type="scientific">Schizosaccharomyces pombe (strain 972 / ATCC 24843)</name>
    <name type="common">Fission yeast</name>
    <dbReference type="NCBI Taxonomy" id="284812"/>
    <lineage>
        <taxon>Eukaryota</taxon>
        <taxon>Fungi</taxon>
        <taxon>Dikarya</taxon>
        <taxon>Ascomycota</taxon>
        <taxon>Taphrinomycotina</taxon>
        <taxon>Schizosaccharomycetes</taxon>
        <taxon>Schizosaccharomycetales</taxon>
        <taxon>Schizosaccharomycetaceae</taxon>
        <taxon>Schizosaccharomyces</taxon>
    </lineage>
</organism>
<accession>Q06182</accession>
<sequence>MSDIDDEEFEQLAVSALEEVEKKAGFAQQPTPQKVSRVTAHSILVNPRQKGNPLLPHVRNVPWEYTDIVPDFVMGTGICSLFLSLKYHHLHPEYIYSRISKLGKSYNLRILLILVDVENHQASIQELVKTSIVNQYTLILAWSSEEAARYLETYKAYENMSPALIMEKPSTDYLSQVQSFLTSIRGINKSDSLSLLSKFGSLERALVASRDELEQLEGWGPTKVNRFLEAVQQPFMSHSTIKRPEAINLKQT</sequence>
<reference key="1">
    <citation type="journal article" date="1992" name="Nucleic Acids Res.">
        <title>The protein sequence and some intron positions are conserved between the switching gene swi10 of Schizosaccharomyces pombe and the human excision repair gene ERCC1.</title>
        <authorList>
            <person name="Roedel C."/>
            <person name="Kirchhoff S."/>
            <person name="Schmidt H."/>
        </authorList>
    </citation>
    <scope>NUCLEOTIDE SEQUENCE [GENOMIC DNA]</scope>
</reference>
<reference key="2">
    <citation type="journal article" date="2002" name="Nature">
        <title>The genome sequence of Schizosaccharomyces pombe.</title>
        <authorList>
            <person name="Wood V."/>
            <person name="Gwilliam R."/>
            <person name="Rajandream M.A."/>
            <person name="Lyne M.H."/>
            <person name="Lyne R."/>
            <person name="Stewart A."/>
            <person name="Sgouros J.G."/>
            <person name="Peat N."/>
            <person name="Hayles J."/>
            <person name="Baker S.G."/>
            <person name="Basham D."/>
            <person name="Bowman S."/>
            <person name="Brooks K."/>
            <person name="Brown D."/>
            <person name="Brown S."/>
            <person name="Chillingworth T."/>
            <person name="Churcher C.M."/>
            <person name="Collins M."/>
            <person name="Connor R."/>
            <person name="Cronin A."/>
            <person name="Davis P."/>
            <person name="Feltwell T."/>
            <person name="Fraser A."/>
            <person name="Gentles S."/>
            <person name="Goble A."/>
            <person name="Hamlin N."/>
            <person name="Harris D.E."/>
            <person name="Hidalgo J."/>
            <person name="Hodgson G."/>
            <person name="Holroyd S."/>
            <person name="Hornsby T."/>
            <person name="Howarth S."/>
            <person name="Huckle E.J."/>
            <person name="Hunt S."/>
            <person name="Jagels K."/>
            <person name="James K.D."/>
            <person name="Jones L."/>
            <person name="Jones M."/>
            <person name="Leather S."/>
            <person name="McDonald S."/>
            <person name="McLean J."/>
            <person name="Mooney P."/>
            <person name="Moule S."/>
            <person name="Mungall K.L."/>
            <person name="Murphy L.D."/>
            <person name="Niblett D."/>
            <person name="Odell C."/>
            <person name="Oliver K."/>
            <person name="O'Neil S."/>
            <person name="Pearson D."/>
            <person name="Quail M.A."/>
            <person name="Rabbinowitsch E."/>
            <person name="Rutherford K.M."/>
            <person name="Rutter S."/>
            <person name="Saunders D."/>
            <person name="Seeger K."/>
            <person name="Sharp S."/>
            <person name="Skelton J."/>
            <person name="Simmonds M.N."/>
            <person name="Squares R."/>
            <person name="Squares S."/>
            <person name="Stevens K."/>
            <person name="Taylor K."/>
            <person name="Taylor R.G."/>
            <person name="Tivey A."/>
            <person name="Walsh S.V."/>
            <person name="Warren T."/>
            <person name="Whitehead S."/>
            <person name="Woodward J.R."/>
            <person name="Volckaert G."/>
            <person name="Aert R."/>
            <person name="Robben J."/>
            <person name="Grymonprez B."/>
            <person name="Weltjens I."/>
            <person name="Vanstreels E."/>
            <person name="Rieger M."/>
            <person name="Schaefer M."/>
            <person name="Mueller-Auer S."/>
            <person name="Gabel C."/>
            <person name="Fuchs M."/>
            <person name="Duesterhoeft A."/>
            <person name="Fritzc C."/>
            <person name="Holzer E."/>
            <person name="Moestl D."/>
            <person name="Hilbert H."/>
            <person name="Borzym K."/>
            <person name="Langer I."/>
            <person name="Beck A."/>
            <person name="Lehrach H."/>
            <person name="Reinhardt R."/>
            <person name="Pohl T.M."/>
            <person name="Eger P."/>
            <person name="Zimmermann W."/>
            <person name="Wedler H."/>
            <person name="Wambutt R."/>
            <person name="Purnelle B."/>
            <person name="Goffeau A."/>
            <person name="Cadieu E."/>
            <person name="Dreano S."/>
            <person name="Gloux S."/>
            <person name="Lelaure V."/>
            <person name="Mottier S."/>
            <person name="Galibert F."/>
            <person name="Aves S.J."/>
            <person name="Xiang Z."/>
            <person name="Hunt C."/>
            <person name="Moore K."/>
            <person name="Hurst S.M."/>
            <person name="Lucas M."/>
            <person name="Rochet M."/>
            <person name="Gaillardin C."/>
            <person name="Tallada V.A."/>
            <person name="Garzon A."/>
            <person name="Thode G."/>
            <person name="Daga R.R."/>
            <person name="Cruzado L."/>
            <person name="Jimenez J."/>
            <person name="Sanchez M."/>
            <person name="del Rey F."/>
            <person name="Benito J."/>
            <person name="Dominguez A."/>
            <person name="Revuelta J.L."/>
            <person name="Moreno S."/>
            <person name="Armstrong J."/>
            <person name="Forsburg S.L."/>
            <person name="Cerutti L."/>
            <person name="Lowe T."/>
            <person name="McCombie W.R."/>
            <person name="Paulsen I."/>
            <person name="Potashkin J."/>
            <person name="Shpakovski G.V."/>
            <person name="Ussery D."/>
            <person name="Barrell B.G."/>
            <person name="Nurse P."/>
        </authorList>
    </citation>
    <scope>NUCLEOTIDE SEQUENCE [LARGE SCALE GENOMIC DNA]</scope>
    <source>
        <strain>972 / ATCC 24843</strain>
    </source>
</reference>
<dbReference type="EMBL" id="X61926">
    <property type="protein sequence ID" value="CAA43928.1"/>
    <property type="molecule type" value="Genomic_DNA"/>
</dbReference>
<dbReference type="EMBL" id="CU329671">
    <property type="protein sequence ID" value="CAA20735.1"/>
    <property type="molecule type" value="Genomic_DNA"/>
</dbReference>
<dbReference type="PIR" id="S30292">
    <property type="entry name" value="S30292"/>
</dbReference>
<dbReference type="RefSeq" id="NP_596115.1">
    <property type="nucleotide sequence ID" value="NM_001022032.2"/>
</dbReference>
<dbReference type="SMR" id="Q06182"/>
<dbReference type="BioGRID" id="277404">
    <property type="interactions" value="54"/>
</dbReference>
<dbReference type="DIP" id="DIP-61016N"/>
<dbReference type="FunCoup" id="Q06182">
    <property type="interactions" value="81"/>
</dbReference>
<dbReference type="IntAct" id="Q06182">
    <property type="interactions" value="2"/>
</dbReference>
<dbReference type="STRING" id="284812.Q06182"/>
<dbReference type="iPTMnet" id="Q06182"/>
<dbReference type="PaxDb" id="4896-SPBC4F6.15c.1"/>
<dbReference type="EnsemblFungi" id="SPBC4F6.15c.1">
    <property type="protein sequence ID" value="SPBC4F6.15c.1:pep"/>
    <property type="gene ID" value="SPBC4F6.15c"/>
</dbReference>
<dbReference type="GeneID" id="2540887"/>
<dbReference type="KEGG" id="spo:2540887"/>
<dbReference type="PomBase" id="SPBC4F6.15c">
    <property type="gene designation" value="swi10"/>
</dbReference>
<dbReference type="VEuPathDB" id="FungiDB:SPBC4F6.15c"/>
<dbReference type="eggNOG" id="KOG2841">
    <property type="taxonomic scope" value="Eukaryota"/>
</dbReference>
<dbReference type="HOGENOM" id="CLU_041616_3_0_1"/>
<dbReference type="InParanoid" id="Q06182"/>
<dbReference type="OMA" id="PHCVLVH"/>
<dbReference type="PhylomeDB" id="Q06182"/>
<dbReference type="Reactome" id="R-SPO-5696395">
    <property type="pathway name" value="Formation of Incision Complex in GG-NER"/>
</dbReference>
<dbReference type="Reactome" id="R-SPO-5696400">
    <property type="pathway name" value="Dual Incision in GG-NER"/>
</dbReference>
<dbReference type="Reactome" id="R-SPO-6782135">
    <property type="pathway name" value="Dual incision in TC-NER"/>
</dbReference>
<dbReference type="PRO" id="PR:Q06182"/>
<dbReference type="Proteomes" id="UP000002485">
    <property type="component" value="Chromosome II"/>
</dbReference>
<dbReference type="GO" id="GO:0005829">
    <property type="term" value="C:cytosol"/>
    <property type="evidence" value="ECO:0007005"/>
    <property type="project" value="PomBase"/>
</dbReference>
<dbReference type="GO" id="GO:0070522">
    <property type="term" value="C:ERCC4-ERCC1 complex"/>
    <property type="evidence" value="ECO:0000318"/>
    <property type="project" value="GO_Central"/>
</dbReference>
<dbReference type="GO" id="GO:0000110">
    <property type="term" value="C:nucleotide-excision repair factor 1 complex"/>
    <property type="evidence" value="ECO:0000353"/>
    <property type="project" value="PomBase"/>
</dbReference>
<dbReference type="GO" id="GO:0005634">
    <property type="term" value="C:nucleus"/>
    <property type="evidence" value="ECO:0007005"/>
    <property type="project" value="PomBase"/>
</dbReference>
<dbReference type="GO" id="GO:0035861">
    <property type="term" value="C:site of double-strand break"/>
    <property type="evidence" value="ECO:0000314"/>
    <property type="project" value="PomBase"/>
</dbReference>
<dbReference type="GO" id="GO:0003684">
    <property type="term" value="F:damaged DNA binding"/>
    <property type="evidence" value="ECO:0000318"/>
    <property type="project" value="GO_Central"/>
</dbReference>
<dbReference type="GO" id="GO:0004519">
    <property type="term" value="F:endonuclease activity"/>
    <property type="evidence" value="ECO:0007669"/>
    <property type="project" value="UniProtKB-KW"/>
</dbReference>
<dbReference type="GO" id="GO:0031593">
    <property type="term" value="F:polyubiquitin modification-dependent protein binding"/>
    <property type="evidence" value="ECO:0000314"/>
    <property type="project" value="PomBase"/>
</dbReference>
<dbReference type="GO" id="GO:0003697">
    <property type="term" value="F:single-stranded DNA binding"/>
    <property type="evidence" value="ECO:0000318"/>
    <property type="project" value="GO_Central"/>
</dbReference>
<dbReference type="GO" id="GO:0045002">
    <property type="term" value="P:double-strand break repair via single-strand annealing"/>
    <property type="evidence" value="ECO:0000315"/>
    <property type="project" value="PomBase"/>
</dbReference>
<dbReference type="GO" id="GO:0007534">
    <property type="term" value="P:gene conversion at mating-type locus"/>
    <property type="evidence" value="ECO:0000315"/>
    <property type="project" value="PomBase"/>
</dbReference>
<dbReference type="GO" id="GO:0007533">
    <property type="term" value="P:mating type switching"/>
    <property type="evidence" value="ECO:0000315"/>
    <property type="project" value="PomBase"/>
</dbReference>
<dbReference type="GO" id="GO:0006312">
    <property type="term" value="P:mitotic recombination"/>
    <property type="evidence" value="ECO:0000318"/>
    <property type="project" value="GO_Central"/>
</dbReference>
<dbReference type="GO" id="GO:0070914">
    <property type="term" value="P:UV-damage excision repair"/>
    <property type="evidence" value="ECO:0000318"/>
    <property type="project" value="GO_Central"/>
</dbReference>
<dbReference type="CDD" id="cd22325">
    <property type="entry name" value="ERCC1_C-like"/>
    <property type="match status" value="1"/>
</dbReference>
<dbReference type="FunFam" id="3.40.50.10130:FF:000001">
    <property type="entry name" value="DNA excision repair protein ERCC-1"/>
    <property type="match status" value="1"/>
</dbReference>
<dbReference type="Gene3D" id="3.40.50.10130">
    <property type="match status" value="1"/>
</dbReference>
<dbReference type="Gene3D" id="1.10.150.20">
    <property type="entry name" value="5' to 3' exonuclease, C-terminal subdomain"/>
    <property type="match status" value="1"/>
</dbReference>
<dbReference type="InterPro" id="IPR047260">
    <property type="entry name" value="ERCC1-like_central_dom"/>
</dbReference>
<dbReference type="InterPro" id="IPR004579">
    <property type="entry name" value="ERCC1/RAD10/SWI10"/>
</dbReference>
<dbReference type="InterPro" id="IPR011335">
    <property type="entry name" value="Restrct_endonuc-II-like"/>
</dbReference>
<dbReference type="InterPro" id="IPR010994">
    <property type="entry name" value="RuvA_2-like"/>
</dbReference>
<dbReference type="NCBIfam" id="TIGR00597">
    <property type="entry name" value="rad10"/>
    <property type="match status" value="1"/>
</dbReference>
<dbReference type="PANTHER" id="PTHR12749:SF0">
    <property type="entry name" value="DNA EXCISION REPAIR PROTEIN ERCC-1"/>
    <property type="match status" value="1"/>
</dbReference>
<dbReference type="PANTHER" id="PTHR12749">
    <property type="entry name" value="EXCISION REPAIR CROSS-COMPLEMENTING 1 ERCC1"/>
    <property type="match status" value="1"/>
</dbReference>
<dbReference type="Pfam" id="PF14520">
    <property type="entry name" value="HHH_5"/>
    <property type="match status" value="1"/>
</dbReference>
<dbReference type="Pfam" id="PF03834">
    <property type="entry name" value="Rad10"/>
    <property type="match status" value="1"/>
</dbReference>
<dbReference type="SUPFAM" id="SSF52980">
    <property type="entry name" value="Restriction endonuclease-like"/>
    <property type="match status" value="1"/>
</dbReference>
<dbReference type="SUPFAM" id="SSF47781">
    <property type="entry name" value="RuvA domain 2-like"/>
    <property type="match status" value="1"/>
</dbReference>
<keyword id="KW-0227">DNA damage</keyword>
<keyword id="KW-0234">DNA repair</keyword>
<keyword id="KW-0238">DNA-binding</keyword>
<keyword id="KW-0255">Endonuclease</keyword>
<keyword id="KW-0378">Hydrolase</keyword>
<keyword id="KW-0540">Nuclease</keyword>
<keyword id="KW-0539">Nucleus</keyword>
<keyword id="KW-1185">Reference proteome</keyword>
<proteinExistence type="evidence at protein level"/>
<gene>
    <name type="primary">swi10</name>
    <name type="ORF">SPBC4F6.15c</name>
</gene>
<evidence type="ECO:0000255" key="1"/>
<evidence type="ECO:0000305" key="2"/>
<protein>
    <recommendedName>
        <fullName>Mating-type switching protein swi10</fullName>
    </recommendedName>
</protein>